<feature type="chain" id="PRO_1000082524" description="tRNA (guanine-N(1)-)-methyltransferase">
    <location>
        <begin position="1"/>
        <end position="250"/>
    </location>
</feature>
<feature type="binding site" evidence="1">
    <location>
        <position position="112"/>
    </location>
    <ligand>
        <name>S-adenosyl-L-methionine</name>
        <dbReference type="ChEBI" id="CHEBI:59789"/>
    </ligand>
</feature>
<feature type="binding site" evidence="1">
    <location>
        <begin position="132"/>
        <end position="137"/>
    </location>
    <ligand>
        <name>S-adenosyl-L-methionine</name>
        <dbReference type="ChEBI" id="CHEBI:59789"/>
    </ligand>
</feature>
<proteinExistence type="inferred from homology"/>
<protein>
    <recommendedName>
        <fullName evidence="1">tRNA (guanine-N(1)-)-methyltransferase</fullName>
        <ecNumber evidence="1">2.1.1.228</ecNumber>
    </recommendedName>
    <alternativeName>
        <fullName evidence="1">M1G-methyltransferase</fullName>
    </alternativeName>
    <alternativeName>
        <fullName evidence="1">tRNA [GM37] methyltransferase</fullName>
    </alternativeName>
</protein>
<accession>A6W1U0</accession>
<sequence>MKVSVISLFPEMFQAITQYGVTGRAIKSGLVEVDFFNPRDFTHDRHKTVDDRPYGGGPGMLMKVQPLKDAIASAKLSVPNAKVIYLSPQGRTLTQEGVQQLAKQAEFILVAGRYEGVDERLIQSEIDEEWSIGDFVLSGGELPAMVLMDAVSRMVPGVLGKQASADEDSFSDGLLDCPHYTRPEVLNGEPVPSVLLSGNHEEIRRWRLKQKLARTFQRRPDLLQNLELDKEQQLLLEEFIRETEDSTSAE</sequence>
<name>TRMD_MARMS</name>
<reference key="1">
    <citation type="submission" date="2007-06" db="EMBL/GenBank/DDBJ databases">
        <title>Complete sequence of Marinomonas sp. MWYL1.</title>
        <authorList>
            <consortium name="US DOE Joint Genome Institute"/>
            <person name="Copeland A."/>
            <person name="Lucas S."/>
            <person name="Lapidus A."/>
            <person name="Barry K."/>
            <person name="Glavina del Rio T."/>
            <person name="Dalin E."/>
            <person name="Tice H."/>
            <person name="Pitluck S."/>
            <person name="Kiss H."/>
            <person name="Brettin T."/>
            <person name="Bruce D."/>
            <person name="Detter J.C."/>
            <person name="Han C."/>
            <person name="Schmutz J."/>
            <person name="Larimer F."/>
            <person name="Land M."/>
            <person name="Hauser L."/>
            <person name="Kyrpides N."/>
            <person name="Kim E."/>
            <person name="Johnston A.W.B."/>
            <person name="Todd J.D."/>
            <person name="Rogers R."/>
            <person name="Wexler M."/>
            <person name="Bond P.L."/>
            <person name="Li Y."/>
            <person name="Richardson P."/>
        </authorList>
    </citation>
    <scope>NUCLEOTIDE SEQUENCE [LARGE SCALE GENOMIC DNA]</scope>
    <source>
        <strain>MWYL1</strain>
    </source>
</reference>
<keyword id="KW-0963">Cytoplasm</keyword>
<keyword id="KW-0489">Methyltransferase</keyword>
<keyword id="KW-0949">S-adenosyl-L-methionine</keyword>
<keyword id="KW-0808">Transferase</keyword>
<keyword id="KW-0819">tRNA processing</keyword>
<organism>
    <name type="scientific">Marinomonas sp. (strain MWYL1)</name>
    <dbReference type="NCBI Taxonomy" id="400668"/>
    <lineage>
        <taxon>Bacteria</taxon>
        <taxon>Pseudomonadati</taxon>
        <taxon>Pseudomonadota</taxon>
        <taxon>Gammaproteobacteria</taxon>
        <taxon>Oceanospirillales</taxon>
        <taxon>Oceanospirillaceae</taxon>
        <taxon>Marinomonas</taxon>
    </lineage>
</organism>
<gene>
    <name evidence="1" type="primary">trmD</name>
    <name type="ordered locus">Mmwyl1_3768</name>
</gene>
<evidence type="ECO:0000255" key="1">
    <source>
        <dbReference type="HAMAP-Rule" id="MF_00605"/>
    </source>
</evidence>
<comment type="function">
    <text evidence="1">Specifically methylates guanosine-37 in various tRNAs.</text>
</comment>
<comment type="catalytic activity">
    <reaction evidence="1">
        <text>guanosine(37) in tRNA + S-adenosyl-L-methionine = N(1)-methylguanosine(37) in tRNA + S-adenosyl-L-homocysteine + H(+)</text>
        <dbReference type="Rhea" id="RHEA:36899"/>
        <dbReference type="Rhea" id="RHEA-COMP:10145"/>
        <dbReference type="Rhea" id="RHEA-COMP:10147"/>
        <dbReference type="ChEBI" id="CHEBI:15378"/>
        <dbReference type="ChEBI" id="CHEBI:57856"/>
        <dbReference type="ChEBI" id="CHEBI:59789"/>
        <dbReference type="ChEBI" id="CHEBI:73542"/>
        <dbReference type="ChEBI" id="CHEBI:74269"/>
        <dbReference type="EC" id="2.1.1.228"/>
    </reaction>
</comment>
<comment type="subunit">
    <text evidence="1">Homodimer.</text>
</comment>
<comment type="subcellular location">
    <subcellularLocation>
        <location evidence="1">Cytoplasm</location>
    </subcellularLocation>
</comment>
<comment type="similarity">
    <text evidence="1">Belongs to the RNA methyltransferase TrmD family.</text>
</comment>
<dbReference type="EC" id="2.1.1.228" evidence="1"/>
<dbReference type="EMBL" id="CP000749">
    <property type="protein sequence ID" value="ABR72669.1"/>
    <property type="molecule type" value="Genomic_DNA"/>
</dbReference>
<dbReference type="SMR" id="A6W1U0"/>
<dbReference type="STRING" id="400668.Mmwyl1_3768"/>
<dbReference type="KEGG" id="mmw:Mmwyl1_3768"/>
<dbReference type="eggNOG" id="COG0336">
    <property type="taxonomic scope" value="Bacteria"/>
</dbReference>
<dbReference type="HOGENOM" id="CLU_047363_0_1_6"/>
<dbReference type="OrthoDB" id="9807416at2"/>
<dbReference type="GO" id="GO:0005829">
    <property type="term" value="C:cytosol"/>
    <property type="evidence" value="ECO:0007669"/>
    <property type="project" value="TreeGrafter"/>
</dbReference>
<dbReference type="GO" id="GO:0052906">
    <property type="term" value="F:tRNA (guanine(37)-N1)-methyltransferase activity"/>
    <property type="evidence" value="ECO:0007669"/>
    <property type="project" value="UniProtKB-UniRule"/>
</dbReference>
<dbReference type="GO" id="GO:0002939">
    <property type="term" value="P:tRNA N1-guanine methylation"/>
    <property type="evidence" value="ECO:0007669"/>
    <property type="project" value="TreeGrafter"/>
</dbReference>
<dbReference type="CDD" id="cd18080">
    <property type="entry name" value="TrmD-like"/>
    <property type="match status" value="1"/>
</dbReference>
<dbReference type="FunFam" id="1.10.1270.20:FF:000001">
    <property type="entry name" value="tRNA (guanine-N(1)-)-methyltransferase"/>
    <property type="match status" value="1"/>
</dbReference>
<dbReference type="FunFam" id="3.40.1280.10:FF:000001">
    <property type="entry name" value="tRNA (guanine-N(1)-)-methyltransferase"/>
    <property type="match status" value="1"/>
</dbReference>
<dbReference type="Gene3D" id="3.40.1280.10">
    <property type="match status" value="1"/>
</dbReference>
<dbReference type="Gene3D" id="1.10.1270.20">
    <property type="entry name" value="tRNA(m1g37)methyltransferase, domain 2"/>
    <property type="match status" value="1"/>
</dbReference>
<dbReference type="HAMAP" id="MF_00605">
    <property type="entry name" value="TrmD"/>
    <property type="match status" value="1"/>
</dbReference>
<dbReference type="InterPro" id="IPR029028">
    <property type="entry name" value="Alpha/beta_knot_MTases"/>
</dbReference>
<dbReference type="InterPro" id="IPR023148">
    <property type="entry name" value="tRNA_m1G_MeTrfase_C_sf"/>
</dbReference>
<dbReference type="InterPro" id="IPR002649">
    <property type="entry name" value="tRNA_m1G_MeTrfase_TrmD"/>
</dbReference>
<dbReference type="InterPro" id="IPR029026">
    <property type="entry name" value="tRNA_m1G_MTases_N"/>
</dbReference>
<dbReference type="InterPro" id="IPR016009">
    <property type="entry name" value="tRNA_MeTrfase_TRMD/TRM10"/>
</dbReference>
<dbReference type="NCBIfam" id="NF000648">
    <property type="entry name" value="PRK00026.1"/>
    <property type="match status" value="1"/>
</dbReference>
<dbReference type="NCBIfam" id="TIGR00088">
    <property type="entry name" value="trmD"/>
    <property type="match status" value="1"/>
</dbReference>
<dbReference type="PANTHER" id="PTHR46417">
    <property type="entry name" value="TRNA (GUANINE-N(1)-)-METHYLTRANSFERASE"/>
    <property type="match status" value="1"/>
</dbReference>
<dbReference type="PANTHER" id="PTHR46417:SF1">
    <property type="entry name" value="TRNA (GUANINE-N(1)-)-METHYLTRANSFERASE"/>
    <property type="match status" value="1"/>
</dbReference>
<dbReference type="Pfam" id="PF01746">
    <property type="entry name" value="tRNA_m1G_MT"/>
    <property type="match status" value="1"/>
</dbReference>
<dbReference type="PIRSF" id="PIRSF000386">
    <property type="entry name" value="tRNA_mtase"/>
    <property type="match status" value="1"/>
</dbReference>
<dbReference type="SUPFAM" id="SSF75217">
    <property type="entry name" value="alpha/beta knot"/>
    <property type="match status" value="1"/>
</dbReference>